<protein>
    <recommendedName>
        <fullName evidence="1">Shikimate dehydrogenase (NADP(+))</fullName>
        <shortName evidence="1">SDH</shortName>
        <ecNumber evidence="1">1.1.1.25</ecNumber>
    </recommendedName>
</protein>
<gene>
    <name evidence="1" type="primary">aroE</name>
    <name type="ordered locus">SAV_1777</name>
</gene>
<accession>Q82M83</accession>
<evidence type="ECO:0000255" key="1">
    <source>
        <dbReference type="HAMAP-Rule" id="MF_00222"/>
    </source>
</evidence>
<comment type="function">
    <text evidence="1">Involved in the biosynthesis of the chorismate, which leads to the biosynthesis of aromatic amino acids. Catalyzes the reversible NADPH linked reduction of 3-dehydroshikimate (DHSA) to yield shikimate (SA).</text>
</comment>
<comment type="catalytic activity">
    <reaction evidence="1">
        <text>shikimate + NADP(+) = 3-dehydroshikimate + NADPH + H(+)</text>
        <dbReference type="Rhea" id="RHEA:17737"/>
        <dbReference type="ChEBI" id="CHEBI:15378"/>
        <dbReference type="ChEBI" id="CHEBI:16630"/>
        <dbReference type="ChEBI" id="CHEBI:36208"/>
        <dbReference type="ChEBI" id="CHEBI:57783"/>
        <dbReference type="ChEBI" id="CHEBI:58349"/>
        <dbReference type="EC" id="1.1.1.25"/>
    </reaction>
</comment>
<comment type="pathway">
    <text evidence="1">Metabolic intermediate biosynthesis; chorismate biosynthesis; chorismate from D-erythrose 4-phosphate and phosphoenolpyruvate: step 4/7.</text>
</comment>
<comment type="subunit">
    <text evidence="1">Homodimer.</text>
</comment>
<comment type="similarity">
    <text evidence="1">Belongs to the shikimate dehydrogenase family.</text>
</comment>
<reference key="1">
    <citation type="journal article" date="2003" name="Nat. Biotechnol.">
        <title>Complete genome sequence and comparative analysis of the industrial microorganism Streptomyces avermitilis.</title>
        <authorList>
            <person name="Ikeda H."/>
            <person name="Ishikawa J."/>
            <person name="Hanamoto A."/>
            <person name="Shinose M."/>
            <person name="Kikuchi H."/>
            <person name="Shiba T."/>
            <person name="Sakaki Y."/>
            <person name="Hattori M."/>
            <person name="Omura S."/>
        </authorList>
    </citation>
    <scope>NUCLEOTIDE SEQUENCE [LARGE SCALE GENOMIC DNA]</scope>
    <source>
        <strain>ATCC 31267 / DSM 46492 / JCM 5070 / NBRC 14893 / NCIMB 12804 / NRRL 8165 / MA-4680</strain>
    </source>
</reference>
<reference key="2">
    <citation type="journal article" date="2001" name="Proc. Natl. Acad. Sci. U.S.A.">
        <title>Genome sequence of an industrial microorganism Streptomyces avermitilis: deducing the ability of producing secondary metabolites.</title>
        <authorList>
            <person name="Omura S."/>
            <person name="Ikeda H."/>
            <person name="Ishikawa J."/>
            <person name="Hanamoto A."/>
            <person name="Takahashi C."/>
            <person name="Shinose M."/>
            <person name="Takahashi Y."/>
            <person name="Horikawa H."/>
            <person name="Nakazawa H."/>
            <person name="Osonoe T."/>
            <person name="Kikuchi H."/>
            <person name="Shiba T."/>
            <person name="Sakaki Y."/>
            <person name="Hattori M."/>
        </authorList>
    </citation>
    <scope>NUCLEOTIDE SEQUENCE [LARGE SCALE GENOMIC DNA]</scope>
    <source>
        <strain>ATCC 31267 / DSM 46492 / JCM 5070 / NBRC 14893 / NCIMB 12804 / NRRL 8165 / MA-4680</strain>
    </source>
</reference>
<keyword id="KW-0028">Amino-acid biosynthesis</keyword>
<keyword id="KW-0057">Aromatic amino acid biosynthesis</keyword>
<keyword id="KW-0521">NADP</keyword>
<keyword id="KW-0560">Oxidoreductase</keyword>
<keyword id="KW-1185">Reference proteome</keyword>
<proteinExistence type="inferred from homology"/>
<sequence length="291" mass="30129">MTQDSYLVGLIGSGIGPSLSPALHEREAGRQGLRYHYRLIDIDRLGVGPEAVGGLVRAARDLGFDGLNITHPCKQLVISHLDTLAPQAEALGAVNTVVFEDGRAVGHNTDVTGFAASFARGLPDARLERVVQLGAGGAGAAVAHALLTLGAGHVTVVDALPERAAALAVALNRHFGDGRAAAASPDTLPKLLTDADGIVHATPTGMAAHPGIPLPAELLHPGLWVAEVVYRPLETELLRTARALGCATLDGGGMAVFQAVDAFRLFTGREPDSMRMLADIAELAGTAAVRH</sequence>
<organism>
    <name type="scientific">Streptomyces avermitilis (strain ATCC 31267 / DSM 46492 / JCM 5070 / NBRC 14893 / NCIMB 12804 / NRRL 8165 / MA-4680)</name>
    <dbReference type="NCBI Taxonomy" id="227882"/>
    <lineage>
        <taxon>Bacteria</taxon>
        <taxon>Bacillati</taxon>
        <taxon>Actinomycetota</taxon>
        <taxon>Actinomycetes</taxon>
        <taxon>Kitasatosporales</taxon>
        <taxon>Streptomycetaceae</taxon>
        <taxon>Streptomyces</taxon>
    </lineage>
</organism>
<name>AROE_STRAW</name>
<dbReference type="EC" id="1.1.1.25" evidence="1"/>
<dbReference type="EMBL" id="BA000030">
    <property type="protein sequence ID" value="BAC69488.1"/>
    <property type="molecule type" value="Genomic_DNA"/>
</dbReference>
<dbReference type="RefSeq" id="WP_010983216.1">
    <property type="nucleotide sequence ID" value="NZ_JZJK01000086.1"/>
</dbReference>
<dbReference type="SMR" id="Q82M83"/>
<dbReference type="GeneID" id="41538878"/>
<dbReference type="KEGG" id="sma:SAVERM_1777"/>
<dbReference type="eggNOG" id="COG0169">
    <property type="taxonomic scope" value="Bacteria"/>
</dbReference>
<dbReference type="HOGENOM" id="CLU_044063_4_3_11"/>
<dbReference type="OrthoDB" id="9776868at2"/>
<dbReference type="UniPathway" id="UPA00053">
    <property type="reaction ID" value="UER00087"/>
</dbReference>
<dbReference type="Proteomes" id="UP000000428">
    <property type="component" value="Chromosome"/>
</dbReference>
<dbReference type="GO" id="GO:0005829">
    <property type="term" value="C:cytosol"/>
    <property type="evidence" value="ECO:0007669"/>
    <property type="project" value="TreeGrafter"/>
</dbReference>
<dbReference type="GO" id="GO:0050661">
    <property type="term" value="F:NADP binding"/>
    <property type="evidence" value="ECO:0007669"/>
    <property type="project" value="TreeGrafter"/>
</dbReference>
<dbReference type="GO" id="GO:0004764">
    <property type="term" value="F:shikimate 3-dehydrogenase (NADP+) activity"/>
    <property type="evidence" value="ECO:0007669"/>
    <property type="project" value="UniProtKB-UniRule"/>
</dbReference>
<dbReference type="GO" id="GO:0008652">
    <property type="term" value="P:amino acid biosynthetic process"/>
    <property type="evidence" value="ECO:0007669"/>
    <property type="project" value="UniProtKB-KW"/>
</dbReference>
<dbReference type="GO" id="GO:0009073">
    <property type="term" value="P:aromatic amino acid family biosynthetic process"/>
    <property type="evidence" value="ECO:0007669"/>
    <property type="project" value="UniProtKB-KW"/>
</dbReference>
<dbReference type="GO" id="GO:0009423">
    <property type="term" value="P:chorismate biosynthetic process"/>
    <property type="evidence" value="ECO:0007669"/>
    <property type="project" value="UniProtKB-UniRule"/>
</dbReference>
<dbReference type="GO" id="GO:0019632">
    <property type="term" value="P:shikimate metabolic process"/>
    <property type="evidence" value="ECO:0007669"/>
    <property type="project" value="TreeGrafter"/>
</dbReference>
<dbReference type="CDD" id="cd01065">
    <property type="entry name" value="NAD_bind_Shikimate_DH"/>
    <property type="match status" value="1"/>
</dbReference>
<dbReference type="FunFam" id="3.40.50.720:FF:000086">
    <property type="entry name" value="Quinate/shikimate dehydrogenase"/>
    <property type="match status" value="1"/>
</dbReference>
<dbReference type="Gene3D" id="3.40.50.10860">
    <property type="entry name" value="Leucine Dehydrogenase, chain A, domain 1"/>
    <property type="match status" value="1"/>
</dbReference>
<dbReference type="Gene3D" id="3.40.50.720">
    <property type="entry name" value="NAD(P)-binding Rossmann-like Domain"/>
    <property type="match status" value="1"/>
</dbReference>
<dbReference type="HAMAP" id="MF_00222">
    <property type="entry name" value="Shikimate_DH_AroE"/>
    <property type="match status" value="1"/>
</dbReference>
<dbReference type="InterPro" id="IPR046346">
    <property type="entry name" value="Aminoacid_DH-like_N_sf"/>
</dbReference>
<dbReference type="InterPro" id="IPR036291">
    <property type="entry name" value="NAD(P)-bd_dom_sf"/>
</dbReference>
<dbReference type="InterPro" id="IPR013708">
    <property type="entry name" value="Shikimate_DH-bd_N"/>
</dbReference>
<dbReference type="InterPro" id="IPR022893">
    <property type="entry name" value="Shikimate_DH_fam"/>
</dbReference>
<dbReference type="NCBIfam" id="NF001319">
    <property type="entry name" value="PRK00258.3-3"/>
    <property type="match status" value="1"/>
</dbReference>
<dbReference type="NCBIfam" id="NF009201">
    <property type="entry name" value="PRK12549.1"/>
    <property type="match status" value="1"/>
</dbReference>
<dbReference type="PANTHER" id="PTHR21089:SF1">
    <property type="entry name" value="BIFUNCTIONAL 3-DEHYDROQUINATE DEHYDRATASE_SHIKIMATE DEHYDROGENASE, CHLOROPLASTIC"/>
    <property type="match status" value="1"/>
</dbReference>
<dbReference type="PANTHER" id="PTHR21089">
    <property type="entry name" value="SHIKIMATE DEHYDROGENASE"/>
    <property type="match status" value="1"/>
</dbReference>
<dbReference type="Pfam" id="PF08501">
    <property type="entry name" value="Shikimate_dh_N"/>
    <property type="match status" value="1"/>
</dbReference>
<dbReference type="SUPFAM" id="SSF53223">
    <property type="entry name" value="Aminoacid dehydrogenase-like, N-terminal domain"/>
    <property type="match status" value="1"/>
</dbReference>
<dbReference type="SUPFAM" id="SSF51735">
    <property type="entry name" value="NAD(P)-binding Rossmann-fold domains"/>
    <property type="match status" value="1"/>
</dbReference>
<feature type="chain" id="PRO_0000325173" description="Shikimate dehydrogenase (NADP(+))">
    <location>
        <begin position="1"/>
        <end position="291"/>
    </location>
</feature>
<feature type="active site" description="Proton acceptor" evidence="1">
    <location>
        <position position="74"/>
    </location>
</feature>
<feature type="binding site" evidence="1">
    <location>
        <begin position="18"/>
        <end position="20"/>
    </location>
    <ligand>
        <name>shikimate</name>
        <dbReference type="ChEBI" id="CHEBI:36208"/>
    </ligand>
</feature>
<feature type="binding site" evidence="1">
    <location>
        <position position="70"/>
    </location>
    <ligand>
        <name>shikimate</name>
        <dbReference type="ChEBI" id="CHEBI:36208"/>
    </ligand>
</feature>
<feature type="binding site" evidence="1">
    <location>
        <position position="95"/>
    </location>
    <ligand>
        <name>shikimate</name>
        <dbReference type="ChEBI" id="CHEBI:36208"/>
    </ligand>
</feature>
<feature type="binding site" evidence="1">
    <location>
        <position position="110"/>
    </location>
    <ligand>
        <name>shikimate</name>
        <dbReference type="ChEBI" id="CHEBI:36208"/>
    </ligand>
</feature>
<feature type="binding site" evidence="1">
    <location>
        <begin position="134"/>
        <end position="138"/>
    </location>
    <ligand>
        <name>NADP(+)</name>
        <dbReference type="ChEBI" id="CHEBI:58349"/>
    </ligand>
</feature>
<feature type="binding site" evidence="1">
    <location>
        <position position="228"/>
    </location>
    <ligand>
        <name>NADP(+)</name>
        <dbReference type="ChEBI" id="CHEBI:58349"/>
    </ligand>
</feature>
<feature type="binding site" evidence="1">
    <location>
        <position position="230"/>
    </location>
    <ligand>
        <name>shikimate</name>
        <dbReference type="ChEBI" id="CHEBI:36208"/>
    </ligand>
</feature>
<feature type="binding site" evidence="1">
    <location>
        <position position="251"/>
    </location>
    <ligand>
        <name>NADP(+)</name>
        <dbReference type="ChEBI" id="CHEBI:58349"/>
    </ligand>
</feature>